<accession>Q04DI0</accession>
<evidence type="ECO:0000255" key="1">
    <source>
        <dbReference type="HAMAP-Rule" id="MF_00101"/>
    </source>
</evidence>
<proteinExistence type="inferred from homology"/>
<sequence length="131" mass="14338">MSYRIGIDIESISDVQAAAEKHKQFLDKVLTKSEQKQLAGRKGNGYYAYLAGRFSSKEAYAKATGFGIGSKVNFTDIEILDDENGAPRLSVSGRSLFLNAKSYQISISHKIKLDLVATEVLIEVEDGNSDS</sequence>
<dbReference type="EC" id="2.7.8.7" evidence="1"/>
<dbReference type="EMBL" id="CP000411">
    <property type="protein sequence ID" value="ABJ57492.1"/>
    <property type="molecule type" value="Genomic_DNA"/>
</dbReference>
<dbReference type="RefSeq" id="WP_002819461.1">
    <property type="nucleotide sequence ID" value="NC_008528.1"/>
</dbReference>
<dbReference type="SMR" id="Q04DI0"/>
<dbReference type="STRING" id="203123.OEOE_1642"/>
<dbReference type="GeneID" id="75066551"/>
<dbReference type="KEGG" id="ooe:OEOE_1642"/>
<dbReference type="eggNOG" id="COG0736">
    <property type="taxonomic scope" value="Bacteria"/>
</dbReference>
<dbReference type="HOGENOM" id="CLU_089696_1_2_9"/>
<dbReference type="Proteomes" id="UP000000774">
    <property type="component" value="Chromosome"/>
</dbReference>
<dbReference type="GO" id="GO:0005737">
    <property type="term" value="C:cytoplasm"/>
    <property type="evidence" value="ECO:0007669"/>
    <property type="project" value="UniProtKB-SubCell"/>
</dbReference>
<dbReference type="GO" id="GO:0008897">
    <property type="term" value="F:holo-[acyl-carrier-protein] synthase activity"/>
    <property type="evidence" value="ECO:0007669"/>
    <property type="project" value="UniProtKB-UniRule"/>
</dbReference>
<dbReference type="GO" id="GO:0000287">
    <property type="term" value="F:magnesium ion binding"/>
    <property type="evidence" value="ECO:0007669"/>
    <property type="project" value="UniProtKB-UniRule"/>
</dbReference>
<dbReference type="GO" id="GO:0006633">
    <property type="term" value="P:fatty acid biosynthetic process"/>
    <property type="evidence" value="ECO:0007669"/>
    <property type="project" value="UniProtKB-UniRule"/>
</dbReference>
<dbReference type="Gene3D" id="3.90.470.20">
    <property type="entry name" value="4'-phosphopantetheinyl transferase domain"/>
    <property type="match status" value="1"/>
</dbReference>
<dbReference type="HAMAP" id="MF_00101">
    <property type="entry name" value="AcpS"/>
    <property type="match status" value="1"/>
</dbReference>
<dbReference type="InterPro" id="IPR008278">
    <property type="entry name" value="4-PPantetheinyl_Trfase_dom"/>
</dbReference>
<dbReference type="InterPro" id="IPR037143">
    <property type="entry name" value="4-PPantetheinyl_Trfase_dom_sf"/>
</dbReference>
<dbReference type="InterPro" id="IPR002582">
    <property type="entry name" value="ACPS"/>
</dbReference>
<dbReference type="InterPro" id="IPR004568">
    <property type="entry name" value="Ppantetheine-prot_Trfase_dom"/>
</dbReference>
<dbReference type="NCBIfam" id="TIGR00516">
    <property type="entry name" value="acpS"/>
    <property type="match status" value="1"/>
</dbReference>
<dbReference type="NCBIfam" id="TIGR00556">
    <property type="entry name" value="pantethn_trn"/>
    <property type="match status" value="1"/>
</dbReference>
<dbReference type="Pfam" id="PF01648">
    <property type="entry name" value="ACPS"/>
    <property type="match status" value="1"/>
</dbReference>
<dbReference type="SUPFAM" id="SSF56214">
    <property type="entry name" value="4'-phosphopantetheinyl transferase"/>
    <property type="match status" value="1"/>
</dbReference>
<gene>
    <name evidence="1" type="primary">acpS</name>
    <name type="ordered locus">OEOE_1642</name>
</gene>
<name>ACPS_OENOB</name>
<feature type="chain" id="PRO_1000008467" description="Holo-[acyl-carrier-protein] synthase">
    <location>
        <begin position="1"/>
        <end position="131"/>
    </location>
</feature>
<feature type="binding site" evidence="1">
    <location>
        <position position="8"/>
    </location>
    <ligand>
        <name>Mg(2+)</name>
        <dbReference type="ChEBI" id="CHEBI:18420"/>
    </ligand>
</feature>
<feature type="binding site" evidence="1">
    <location>
        <position position="58"/>
    </location>
    <ligand>
        <name>Mg(2+)</name>
        <dbReference type="ChEBI" id="CHEBI:18420"/>
    </ligand>
</feature>
<protein>
    <recommendedName>
        <fullName evidence="1">Holo-[acyl-carrier-protein] synthase</fullName>
        <shortName evidence="1">Holo-ACP synthase</shortName>
        <ecNumber evidence="1">2.7.8.7</ecNumber>
    </recommendedName>
    <alternativeName>
        <fullName evidence="1">4'-phosphopantetheinyl transferase AcpS</fullName>
    </alternativeName>
</protein>
<organism>
    <name type="scientific">Oenococcus oeni (strain ATCC BAA-331 / PSU-1)</name>
    <dbReference type="NCBI Taxonomy" id="203123"/>
    <lineage>
        <taxon>Bacteria</taxon>
        <taxon>Bacillati</taxon>
        <taxon>Bacillota</taxon>
        <taxon>Bacilli</taxon>
        <taxon>Lactobacillales</taxon>
        <taxon>Lactobacillaceae</taxon>
        <taxon>Oenococcus</taxon>
    </lineage>
</organism>
<comment type="function">
    <text evidence="1">Transfers the 4'-phosphopantetheine moiety from coenzyme A to a Ser of acyl-carrier-protein.</text>
</comment>
<comment type="catalytic activity">
    <reaction evidence="1">
        <text>apo-[ACP] + CoA = holo-[ACP] + adenosine 3',5'-bisphosphate + H(+)</text>
        <dbReference type="Rhea" id="RHEA:12068"/>
        <dbReference type="Rhea" id="RHEA-COMP:9685"/>
        <dbReference type="Rhea" id="RHEA-COMP:9690"/>
        <dbReference type="ChEBI" id="CHEBI:15378"/>
        <dbReference type="ChEBI" id="CHEBI:29999"/>
        <dbReference type="ChEBI" id="CHEBI:57287"/>
        <dbReference type="ChEBI" id="CHEBI:58343"/>
        <dbReference type="ChEBI" id="CHEBI:64479"/>
        <dbReference type="EC" id="2.7.8.7"/>
    </reaction>
</comment>
<comment type="cofactor">
    <cofactor evidence="1">
        <name>Mg(2+)</name>
        <dbReference type="ChEBI" id="CHEBI:18420"/>
    </cofactor>
</comment>
<comment type="subcellular location">
    <subcellularLocation>
        <location evidence="1">Cytoplasm</location>
    </subcellularLocation>
</comment>
<comment type="similarity">
    <text evidence="1">Belongs to the P-Pant transferase superfamily. AcpS family.</text>
</comment>
<reference key="1">
    <citation type="journal article" date="2006" name="Proc. Natl. Acad. Sci. U.S.A.">
        <title>Comparative genomics of the lactic acid bacteria.</title>
        <authorList>
            <person name="Makarova K.S."/>
            <person name="Slesarev A."/>
            <person name="Wolf Y.I."/>
            <person name="Sorokin A."/>
            <person name="Mirkin B."/>
            <person name="Koonin E.V."/>
            <person name="Pavlov A."/>
            <person name="Pavlova N."/>
            <person name="Karamychev V."/>
            <person name="Polouchine N."/>
            <person name="Shakhova V."/>
            <person name="Grigoriev I."/>
            <person name="Lou Y."/>
            <person name="Rohksar D."/>
            <person name="Lucas S."/>
            <person name="Huang K."/>
            <person name="Goodstein D.M."/>
            <person name="Hawkins T."/>
            <person name="Plengvidhya V."/>
            <person name="Welker D."/>
            <person name="Hughes J."/>
            <person name="Goh Y."/>
            <person name="Benson A."/>
            <person name="Baldwin K."/>
            <person name="Lee J.-H."/>
            <person name="Diaz-Muniz I."/>
            <person name="Dosti B."/>
            <person name="Smeianov V."/>
            <person name="Wechter W."/>
            <person name="Barabote R."/>
            <person name="Lorca G."/>
            <person name="Altermann E."/>
            <person name="Barrangou R."/>
            <person name="Ganesan B."/>
            <person name="Xie Y."/>
            <person name="Rawsthorne H."/>
            <person name="Tamir D."/>
            <person name="Parker C."/>
            <person name="Breidt F."/>
            <person name="Broadbent J.R."/>
            <person name="Hutkins R."/>
            <person name="O'Sullivan D."/>
            <person name="Steele J."/>
            <person name="Unlu G."/>
            <person name="Saier M.H. Jr."/>
            <person name="Klaenhammer T."/>
            <person name="Richardson P."/>
            <person name="Kozyavkin S."/>
            <person name="Weimer B.C."/>
            <person name="Mills D.A."/>
        </authorList>
    </citation>
    <scope>NUCLEOTIDE SEQUENCE [LARGE SCALE GENOMIC DNA]</scope>
    <source>
        <strain>ATCC BAA-331 / PSU-1</strain>
    </source>
</reference>
<keyword id="KW-0963">Cytoplasm</keyword>
<keyword id="KW-0275">Fatty acid biosynthesis</keyword>
<keyword id="KW-0276">Fatty acid metabolism</keyword>
<keyword id="KW-0444">Lipid biosynthesis</keyword>
<keyword id="KW-0443">Lipid metabolism</keyword>
<keyword id="KW-0460">Magnesium</keyword>
<keyword id="KW-0479">Metal-binding</keyword>
<keyword id="KW-1185">Reference proteome</keyword>
<keyword id="KW-0808">Transferase</keyword>